<feature type="chain" id="PRO_1000135059" description="Imidazole glycerol phosphate synthase subunit HisF">
    <location>
        <begin position="1"/>
        <end position="258"/>
    </location>
</feature>
<feature type="active site" evidence="1">
    <location>
        <position position="11"/>
    </location>
</feature>
<feature type="active site" evidence="1">
    <location>
        <position position="130"/>
    </location>
</feature>
<protein>
    <recommendedName>
        <fullName evidence="1">Imidazole glycerol phosphate synthase subunit HisF</fullName>
        <ecNumber evidence="1">4.3.2.10</ecNumber>
    </recommendedName>
    <alternativeName>
        <fullName evidence="1">IGP synthase cyclase subunit</fullName>
    </alternativeName>
    <alternativeName>
        <fullName evidence="1">IGP synthase subunit HisF</fullName>
    </alternativeName>
    <alternativeName>
        <fullName evidence="1">ImGP synthase subunit HisF</fullName>
        <shortName evidence="1">IGPS subunit HisF</shortName>
    </alternativeName>
</protein>
<sequence length="258" mass="28294">MLSRRIIPCLDVRDGRVVKGVKFRDHIDMGDIVELAMRYRDQGADELVFYDIGASPEGRSVDYAWVGRVARLIDIPFCVAGGIRDVETARAVLHAGADKISINSPALGRPQLISELADAFGVQCVVVGIDSIREEDGQWRVRRYTGDPSKTQALPMRTLDWVAEAQRLGAGEIVLNCMDNDGVRHGYDIAQLRQVRALCRVPLIASGGAGEMQHFADVFDQADADGALAASVFHSGAIPIPELKRFLRAQQIEVRDGQ</sequence>
<evidence type="ECO:0000255" key="1">
    <source>
        <dbReference type="HAMAP-Rule" id="MF_01013"/>
    </source>
</evidence>
<keyword id="KW-0028">Amino-acid biosynthesis</keyword>
<keyword id="KW-0963">Cytoplasm</keyword>
<keyword id="KW-0368">Histidine biosynthesis</keyword>
<keyword id="KW-0456">Lyase</keyword>
<dbReference type="EC" id="4.3.2.10" evidence="1"/>
<dbReference type="EMBL" id="AM920689">
    <property type="protein sequence ID" value="CAP51454.1"/>
    <property type="molecule type" value="Genomic_DNA"/>
</dbReference>
<dbReference type="SMR" id="B0RSL9"/>
<dbReference type="KEGG" id="xca:xcc-b100_2101"/>
<dbReference type="HOGENOM" id="CLU_048577_4_0_6"/>
<dbReference type="UniPathway" id="UPA00031">
    <property type="reaction ID" value="UER00010"/>
</dbReference>
<dbReference type="Proteomes" id="UP000001188">
    <property type="component" value="Chromosome"/>
</dbReference>
<dbReference type="GO" id="GO:0005737">
    <property type="term" value="C:cytoplasm"/>
    <property type="evidence" value="ECO:0007669"/>
    <property type="project" value="UniProtKB-SubCell"/>
</dbReference>
<dbReference type="GO" id="GO:0000107">
    <property type="term" value="F:imidazoleglycerol-phosphate synthase activity"/>
    <property type="evidence" value="ECO:0007669"/>
    <property type="project" value="UniProtKB-UniRule"/>
</dbReference>
<dbReference type="GO" id="GO:0016829">
    <property type="term" value="F:lyase activity"/>
    <property type="evidence" value="ECO:0007669"/>
    <property type="project" value="UniProtKB-KW"/>
</dbReference>
<dbReference type="GO" id="GO:0000105">
    <property type="term" value="P:L-histidine biosynthetic process"/>
    <property type="evidence" value="ECO:0007669"/>
    <property type="project" value="UniProtKB-UniRule"/>
</dbReference>
<dbReference type="CDD" id="cd04731">
    <property type="entry name" value="HisF"/>
    <property type="match status" value="1"/>
</dbReference>
<dbReference type="FunFam" id="3.20.20.70:FF:000006">
    <property type="entry name" value="Imidazole glycerol phosphate synthase subunit HisF"/>
    <property type="match status" value="1"/>
</dbReference>
<dbReference type="Gene3D" id="3.20.20.70">
    <property type="entry name" value="Aldolase class I"/>
    <property type="match status" value="1"/>
</dbReference>
<dbReference type="HAMAP" id="MF_01013">
    <property type="entry name" value="HisF"/>
    <property type="match status" value="1"/>
</dbReference>
<dbReference type="InterPro" id="IPR013785">
    <property type="entry name" value="Aldolase_TIM"/>
</dbReference>
<dbReference type="InterPro" id="IPR006062">
    <property type="entry name" value="His_biosynth"/>
</dbReference>
<dbReference type="InterPro" id="IPR004651">
    <property type="entry name" value="HisF"/>
</dbReference>
<dbReference type="InterPro" id="IPR050064">
    <property type="entry name" value="IGPS_HisA/HisF"/>
</dbReference>
<dbReference type="InterPro" id="IPR011060">
    <property type="entry name" value="RibuloseP-bd_barrel"/>
</dbReference>
<dbReference type="NCBIfam" id="TIGR00735">
    <property type="entry name" value="hisF"/>
    <property type="match status" value="1"/>
</dbReference>
<dbReference type="PANTHER" id="PTHR21235:SF2">
    <property type="entry name" value="IMIDAZOLE GLYCEROL PHOSPHATE SYNTHASE HISHF"/>
    <property type="match status" value="1"/>
</dbReference>
<dbReference type="PANTHER" id="PTHR21235">
    <property type="entry name" value="IMIDAZOLE GLYCEROL PHOSPHATE SYNTHASE SUBUNIT HISF/H IGP SYNTHASE SUBUNIT HISF/H"/>
    <property type="match status" value="1"/>
</dbReference>
<dbReference type="Pfam" id="PF00977">
    <property type="entry name" value="His_biosynth"/>
    <property type="match status" value="1"/>
</dbReference>
<dbReference type="SUPFAM" id="SSF51366">
    <property type="entry name" value="Ribulose-phoshate binding barrel"/>
    <property type="match status" value="1"/>
</dbReference>
<name>HIS6_XANCB</name>
<proteinExistence type="inferred from homology"/>
<gene>
    <name evidence="1" type="primary">hisF</name>
    <name type="ordered locus">xcc-b100_2101</name>
</gene>
<reference key="1">
    <citation type="journal article" date="2008" name="J. Biotechnol.">
        <title>The genome of Xanthomonas campestris pv. campestris B100 and its use for the reconstruction of metabolic pathways involved in xanthan biosynthesis.</title>
        <authorList>
            <person name="Vorhoelter F.-J."/>
            <person name="Schneiker S."/>
            <person name="Goesmann A."/>
            <person name="Krause L."/>
            <person name="Bekel T."/>
            <person name="Kaiser O."/>
            <person name="Linke B."/>
            <person name="Patschkowski T."/>
            <person name="Rueckert C."/>
            <person name="Schmid J."/>
            <person name="Sidhu V.K."/>
            <person name="Sieber V."/>
            <person name="Tauch A."/>
            <person name="Watt S.A."/>
            <person name="Weisshaar B."/>
            <person name="Becker A."/>
            <person name="Niehaus K."/>
            <person name="Puehler A."/>
        </authorList>
    </citation>
    <scope>NUCLEOTIDE SEQUENCE [LARGE SCALE GENOMIC DNA]</scope>
    <source>
        <strain>B100</strain>
    </source>
</reference>
<accession>B0RSL9</accession>
<organism>
    <name type="scientific">Xanthomonas campestris pv. campestris (strain B100)</name>
    <dbReference type="NCBI Taxonomy" id="509169"/>
    <lineage>
        <taxon>Bacteria</taxon>
        <taxon>Pseudomonadati</taxon>
        <taxon>Pseudomonadota</taxon>
        <taxon>Gammaproteobacteria</taxon>
        <taxon>Lysobacterales</taxon>
        <taxon>Lysobacteraceae</taxon>
        <taxon>Xanthomonas</taxon>
    </lineage>
</organism>
<comment type="function">
    <text evidence="1">IGPS catalyzes the conversion of PRFAR and glutamine to IGP, AICAR and glutamate. The HisF subunit catalyzes the cyclization activity that produces IGP and AICAR from PRFAR using the ammonia provided by the HisH subunit.</text>
</comment>
<comment type="catalytic activity">
    <reaction evidence="1">
        <text>5-[(5-phospho-1-deoxy-D-ribulos-1-ylimino)methylamino]-1-(5-phospho-beta-D-ribosyl)imidazole-4-carboxamide + L-glutamine = D-erythro-1-(imidazol-4-yl)glycerol 3-phosphate + 5-amino-1-(5-phospho-beta-D-ribosyl)imidazole-4-carboxamide + L-glutamate + H(+)</text>
        <dbReference type="Rhea" id="RHEA:24793"/>
        <dbReference type="ChEBI" id="CHEBI:15378"/>
        <dbReference type="ChEBI" id="CHEBI:29985"/>
        <dbReference type="ChEBI" id="CHEBI:58278"/>
        <dbReference type="ChEBI" id="CHEBI:58359"/>
        <dbReference type="ChEBI" id="CHEBI:58475"/>
        <dbReference type="ChEBI" id="CHEBI:58525"/>
        <dbReference type="EC" id="4.3.2.10"/>
    </reaction>
</comment>
<comment type="pathway">
    <text evidence="1">Amino-acid biosynthesis; L-histidine biosynthesis; L-histidine from 5-phospho-alpha-D-ribose 1-diphosphate: step 5/9.</text>
</comment>
<comment type="subunit">
    <text evidence="1">Heterodimer of HisH and HisF.</text>
</comment>
<comment type="subcellular location">
    <subcellularLocation>
        <location evidence="1">Cytoplasm</location>
    </subcellularLocation>
</comment>
<comment type="similarity">
    <text evidence="1">Belongs to the HisA/HisF family.</text>
</comment>